<evidence type="ECO:0000255" key="1">
    <source>
        <dbReference type="HAMAP-Rule" id="MF_00440"/>
    </source>
</evidence>
<feature type="chain" id="PRO_0000182324" description="Transcriptional repressor NrdR">
    <location>
        <begin position="1"/>
        <end position="159"/>
    </location>
</feature>
<feature type="domain" description="ATP-cone" evidence="1">
    <location>
        <begin position="49"/>
        <end position="139"/>
    </location>
</feature>
<feature type="zinc finger region" evidence="1">
    <location>
        <begin position="3"/>
        <end position="34"/>
    </location>
</feature>
<name>NRDR_NITEU</name>
<gene>
    <name evidence="1" type="primary">nrdR</name>
    <name type="ordered locus">NE1432</name>
</gene>
<comment type="function">
    <text evidence="1">Negatively regulates transcription of bacterial ribonucleotide reductase nrd genes and operons by binding to NrdR-boxes.</text>
</comment>
<comment type="cofactor">
    <cofactor evidence="1">
        <name>Zn(2+)</name>
        <dbReference type="ChEBI" id="CHEBI:29105"/>
    </cofactor>
    <text evidence="1">Binds 1 zinc ion.</text>
</comment>
<comment type="similarity">
    <text evidence="1">Belongs to the NrdR family.</text>
</comment>
<reference key="1">
    <citation type="journal article" date="2003" name="J. Bacteriol.">
        <title>Complete genome sequence of the ammonia-oxidizing bacterium and obligate chemolithoautotroph Nitrosomonas europaea.</title>
        <authorList>
            <person name="Chain P."/>
            <person name="Lamerdin J.E."/>
            <person name="Larimer F.W."/>
            <person name="Regala W."/>
            <person name="Lao V."/>
            <person name="Land M.L."/>
            <person name="Hauser L."/>
            <person name="Hooper A.B."/>
            <person name="Klotz M.G."/>
            <person name="Norton J."/>
            <person name="Sayavedra-Soto L.A."/>
            <person name="Arciero D.M."/>
            <person name="Hommes N.G."/>
            <person name="Whittaker M.M."/>
            <person name="Arp D.J."/>
        </authorList>
    </citation>
    <scope>NUCLEOTIDE SEQUENCE [LARGE SCALE GENOMIC DNA]</scope>
    <source>
        <strain>ATCC 19718 / CIP 103999 / KCTC 2705 / NBRC 14298</strain>
    </source>
</reference>
<sequence length="159" mass="18288">MRCPFCGAEDTSVVDSRISEEGARIRRRRRCVECEKRFTTYETVELRFPQVIKQDGNRVEFNREKLYTSFARALHKRPVPTGQVDAAIERILQKLLGSGVQEISSRTIGEWVMQELYSLDKVAYIRFASVYRSFEDVGDFQEVIREVQSSPQNGDGPSS</sequence>
<keyword id="KW-0067">ATP-binding</keyword>
<keyword id="KW-0238">DNA-binding</keyword>
<keyword id="KW-0479">Metal-binding</keyword>
<keyword id="KW-0547">Nucleotide-binding</keyword>
<keyword id="KW-1185">Reference proteome</keyword>
<keyword id="KW-0678">Repressor</keyword>
<keyword id="KW-0804">Transcription</keyword>
<keyword id="KW-0805">Transcription regulation</keyword>
<keyword id="KW-0862">Zinc</keyword>
<keyword id="KW-0863">Zinc-finger</keyword>
<protein>
    <recommendedName>
        <fullName evidence="1">Transcriptional repressor NrdR</fullName>
    </recommendedName>
</protein>
<organism>
    <name type="scientific">Nitrosomonas europaea (strain ATCC 19718 / CIP 103999 / KCTC 2705 / NBRC 14298)</name>
    <dbReference type="NCBI Taxonomy" id="228410"/>
    <lineage>
        <taxon>Bacteria</taxon>
        <taxon>Pseudomonadati</taxon>
        <taxon>Pseudomonadota</taxon>
        <taxon>Betaproteobacteria</taxon>
        <taxon>Nitrosomonadales</taxon>
        <taxon>Nitrosomonadaceae</taxon>
        <taxon>Nitrosomonas</taxon>
    </lineage>
</organism>
<dbReference type="EMBL" id="AL954747">
    <property type="protein sequence ID" value="CAD85343.1"/>
    <property type="molecule type" value="Genomic_DNA"/>
</dbReference>
<dbReference type="RefSeq" id="WP_011112000.1">
    <property type="nucleotide sequence ID" value="NC_004757.1"/>
</dbReference>
<dbReference type="SMR" id="Q82UQ0"/>
<dbReference type="STRING" id="228410.NE1432"/>
<dbReference type="GeneID" id="87104606"/>
<dbReference type="KEGG" id="neu:NE1432"/>
<dbReference type="eggNOG" id="COG1327">
    <property type="taxonomic scope" value="Bacteria"/>
</dbReference>
<dbReference type="HOGENOM" id="CLU_108412_0_0_4"/>
<dbReference type="OrthoDB" id="9807461at2"/>
<dbReference type="PhylomeDB" id="Q82UQ0"/>
<dbReference type="Proteomes" id="UP000001416">
    <property type="component" value="Chromosome"/>
</dbReference>
<dbReference type="GO" id="GO:0005524">
    <property type="term" value="F:ATP binding"/>
    <property type="evidence" value="ECO:0007669"/>
    <property type="project" value="UniProtKB-KW"/>
</dbReference>
<dbReference type="GO" id="GO:0003677">
    <property type="term" value="F:DNA binding"/>
    <property type="evidence" value="ECO:0007669"/>
    <property type="project" value="UniProtKB-KW"/>
</dbReference>
<dbReference type="GO" id="GO:0008270">
    <property type="term" value="F:zinc ion binding"/>
    <property type="evidence" value="ECO:0007669"/>
    <property type="project" value="UniProtKB-UniRule"/>
</dbReference>
<dbReference type="GO" id="GO:0045892">
    <property type="term" value="P:negative regulation of DNA-templated transcription"/>
    <property type="evidence" value="ECO:0007669"/>
    <property type="project" value="UniProtKB-UniRule"/>
</dbReference>
<dbReference type="HAMAP" id="MF_00440">
    <property type="entry name" value="NrdR"/>
    <property type="match status" value="1"/>
</dbReference>
<dbReference type="InterPro" id="IPR005144">
    <property type="entry name" value="ATP-cone_dom"/>
</dbReference>
<dbReference type="InterPro" id="IPR055173">
    <property type="entry name" value="NrdR-like_N"/>
</dbReference>
<dbReference type="InterPro" id="IPR003796">
    <property type="entry name" value="RNR_NrdR-like"/>
</dbReference>
<dbReference type="NCBIfam" id="TIGR00244">
    <property type="entry name" value="transcriptional regulator NrdR"/>
    <property type="match status" value="1"/>
</dbReference>
<dbReference type="PANTHER" id="PTHR30455">
    <property type="entry name" value="TRANSCRIPTIONAL REPRESSOR NRDR"/>
    <property type="match status" value="1"/>
</dbReference>
<dbReference type="PANTHER" id="PTHR30455:SF2">
    <property type="entry name" value="TRANSCRIPTIONAL REPRESSOR NRDR"/>
    <property type="match status" value="1"/>
</dbReference>
<dbReference type="Pfam" id="PF03477">
    <property type="entry name" value="ATP-cone"/>
    <property type="match status" value="1"/>
</dbReference>
<dbReference type="Pfam" id="PF22811">
    <property type="entry name" value="Zn_ribbon_NrdR"/>
    <property type="match status" value="1"/>
</dbReference>
<dbReference type="PROSITE" id="PS51161">
    <property type="entry name" value="ATP_CONE"/>
    <property type="match status" value="1"/>
</dbReference>
<accession>Q82UQ0</accession>
<proteinExistence type="inferred from homology"/>